<feature type="chain" id="PRO_0000183281" description="Cytochrome c oxidase subunit 1">
    <location>
        <begin position="1"/>
        <end position="102" status="greater than"/>
    </location>
</feature>
<feature type="topological domain" description="Mitochondrial matrix" evidence="2">
    <location>
        <begin position="1"/>
        <end position="12"/>
    </location>
</feature>
<feature type="transmembrane region" description="Helical; Name=I" evidence="2">
    <location>
        <begin position="13"/>
        <end position="41"/>
    </location>
</feature>
<feature type="topological domain" description="Mitochondrial intermembrane" evidence="2">
    <location>
        <begin position="42"/>
        <end position="51"/>
    </location>
</feature>
<feature type="transmembrane region" description="Helical; Name=II" evidence="2">
    <location>
        <begin position="52"/>
        <end position="87"/>
    </location>
</feature>
<feature type="topological domain" description="Mitochondrial matrix" evidence="2">
    <location>
        <begin position="88"/>
        <end position="95"/>
    </location>
</feature>
<feature type="transmembrane region" description="Helical; Name=III" evidence="2">
    <location>
        <begin position="96"/>
        <end position="102" status="greater than"/>
    </location>
</feature>
<feature type="binding site" evidence="2">
    <location>
        <position position="41"/>
    </location>
    <ligand>
        <name>Na(+)</name>
        <dbReference type="ChEBI" id="CHEBI:29101"/>
    </ligand>
</feature>
<feature type="binding site" evidence="2">
    <location>
        <position position="46"/>
    </location>
    <ligand>
        <name>Na(+)</name>
        <dbReference type="ChEBI" id="CHEBI:29101"/>
    </ligand>
</feature>
<feature type="binding site" description="axial binding residue" evidence="2">
    <location>
        <position position="62"/>
    </location>
    <ligand>
        <name>Fe(II)-heme a</name>
        <dbReference type="ChEBI" id="CHEBI:61715"/>
        <note>low-spin</note>
    </ligand>
    <ligandPart>
        <name>Fe</name>
        <dbReference type="ChEBI" id="CHEBI:18248"/>
    </ligandPart>
</feature>
<feature type="sequence conflict" description="In Ref. 2; CAA39146." evidence="4" ref="2">
    <original>TLLG</original>
    <variation>PPGL</variation>
    <location>
        <begin position="47"/>
        <end position="50"/>
    </location>
</feature>
<feature type="sequence conflict" description="In Ref. 2; CAA39146." evidence="4" ref="2">
    <original>V</original>
    <variation>D</variation>
    <location>
        <position position="59"/>
    </location>
</feature>
<feature type="non-terminal residue">
    <location>
        <position position="102"/>
    </location>
</feature>
<name>COX1_ANAPL</name>
<geneLocation type="mitochondrion"/>
<sequence length="102" mass="11414">MTFINRWLFSTNHKDIGTLYLIFGAWAGMIGTALSLLIRAELGQPGTLLGDDQIYNVIVTRHAFVMIFFMVMPIMIGGFGNWLVPLMIGAPDMAFPRMNNMS</sequence>
<organism>
    <name type="scientific">Anas platyrhynchos</name>
    <name type="common">Mallard</name>
    <name type="synonym">Anas boschas</name>
    <dbReference type="NCBI Taxonomy" id="8839"/>
    <lineage>
        <taxon>Eukaryota</taxon>
        <taxon>Metazoa</taxon>
        <taxon>Chordata</taxon>
        <taxon>Craniata</taxon>
        <taxon>Vertebrata</taxon>
        <taxon>Euteleostomi</taxon>
        <taxon>Archelosauria</taxon>
        <taxon>Archosauria</taxon>
        <taxon>Dinosauria</taxon>
        <taxon>Saurischia</taxon>
        <taxon>Theropoda</taxon>
        <taxon>Coelurosauria</taxon>
        <taxon>Aves</taxon>
        <taxon>Neognathae</taxon>
        <taxon>Galloanserae</taxon>
        <taxon>Anseriformes</taxon>
        <taxon>Anatidae</taxon>
        <taxon>Anatinae</taxon>
        <taxon>Anas</taxon>
    </lineage>
</organism>
<evidence type="ECO:0000250" key="1">
    <source>
        <dbReference type="UniProtKB" id="P00395"/>
    </source>
</evidence>
<evidence type="ECO:0000250" key="2">
    <source>
        <dbReference type="UniProtKB" id="P00396"/>
    </source>
</evidence>
<evidence type="ECO:0000250" key="3">
    <source>
        <dbReference type="UniProtKB" id="P00401"/>
    </source>
</evidence>
<evidence type="ECO:0000305" key="4"/>
<protein>
    <recommendedName>
        <fullName>Cytochrome c oxidase subunit 1</fullName>
        <ecNumber>7.1.1.9</ecNumber>
    </recommendedName>
    <alternativeName>
        <fullName>Cytochrome c oxidase polypeptide I</fullName>
    </alternativeName>
</protein>
<comment type="function">
    <text evidence="3">Component of the cytochrome c oxidase, the last enzyme in the mitochondrial electron transport chain which drives oxidative phosphorylation. The respiratory chain contains 3 multisubunit complexes succinate dehydrogenase (complex II, CII), ubiquinol-cytochrome c oxidoreductase (cytochrome b-c1 complex, complex III, CIII) and cytochrome c oxidase (complex IV, CIV), that cooperate to transfer electrons derived from NADH and succinate to molecular oxygen, creating an electrochemical gradient over the inner membrane that drives transmembrane transport and the ATP synthase. Cytochrome c oxidase is the component of the respiratory chain that catalyzes the reduction of oxygen to water. Electrons originating from reduced cytochrome c in the intermembrane space (IMS) are transferred via the dinuclear copper A center (CU(A)) of subunit 2 and heme A of subunit 1 to the active site in subunit 1, a binuclear center (BNC) formed by heme A3 and copper B (CU(B)). The BNC reduces molecular oxygen to 2 water molecules using 4 electrons from cytochrome c in the IMS and 4 protons from the mitochondrial matrix.</text>
</comment>
<comment type="catalytic activity">
    <reaction evidence="3">
        <text>4 Fe(II)-[cytochrome c] + O2 + 8 H(+)(in) = 4 Fe(III)-[cytochrome c] + 2 H2O + 4 H(+)(out)</text>
        <dbReference type="Rhea" id="RHEA:11436"/>
        <dbReference type="Rhea" id="RHEA-COMP:10350"/>
        <dbReference type="Rhea" id="RHEA-COMP:14399"/>
        <dbReference type="ChEBI" id="CHEBI:15377"/>
        <dbReference type="ChEBI" id="CHEBI:15378"/>
        <dbReference type="ChEBI" id="CHEBI:15379"/>
        <dbReference type="ChEBI" id="CHEBI:29033"/>
        <dbReference type="ChEBI" id="CHEBI:29034"/>
        <dbReference type="EC" id="7.1.1.9"/>
    </reaction>
    <physiologicalReaction direction="left-to-right" evidence="3">
        <dbReference type="Rhea" id="RHEA:11437"/>
    </physiologicalReaction>
</comment>
<comment type="cofactor">
    <cofactor evidence="2">
        <name>heme</name>
        <dbReference type="ChEBI" id="CHEBI:30413"/>
    </cofactor>
    <text evidence="2">Binds 2 heme A groups non-covalently per subunit.</text>
</comment>
<comment type="cofactor">
    <cofactor evidence="2">
        <name>Cu cation</name>
        <dbReference type="ChEBI" id="CHEBI:23378"/>
    </cofactor>
    <text evidence="2">Binds a copper B center.</text>
</comment>
<comment type="pathway">
    <text evidence="3">Energy metabolism; oxidative phosphorylation.</text>
</comment>
<comment type="subunit">
    <text evidence="1 2">Component of the cytochrome c oxidase (complex IV, CIV), a multisubunit enzyme composed of 14 subunits. The complex is composed of a catalytic core of 3 subunits MT-CO1, MT-CO2 and MT-CO3, encoded in the mitochondrial DNA, and 11 supernumerary subunits COX4I, COX5A, COX5B, COX6A, COX6B, COX6C, COX7A, COX7B, COX7C, COX8 and NDUFA4, which are encoded in the nuclear genome. The complex exists as a monomer or a dimer and forms supercomplexes (SCs) in the inner mitochondrial membrane with NADH-ubiquinone oxidoreductase (complex I, CI) and ubiquinol-cytochrome c oxidoreductase (cytochrome b-c1 complex, complex III, CIII), resulting in different assemblies (supercomplex SCI(1)III(2)IV(1) and megacomplex MCI(2)III(2)IV(2)) (By similarity). As a newly synthesized protein, rapidly incorporates into a multi-subunit assembly intermediate in the inner membrane, called MITRAC (mitochondrial translation regulation assembly intermediate of cytochrome c oxidase) complex, whose core components are COA3/MITRAC12 and COX14. Within the MITRAC complex, interacts with COA3 and with SMIM20/MITRAC7; the interaction with SMIM20 stabilizes the newly synthesized MT-CO1 and prevents its premature turnover. Interacts with TMEM177 in a COX20-dependent manner (By similarity).</text>
</comment>
<comment type="subcellular location">
    <subcellularLocation>
        <location evidence="2">Mitochondrion inner membrane</location>
        <topology evidence="2">Multi-pass membrane protein</topology>
    </subcellularLocation>
</comment>
<comment type="similarity">
    <text evidence="4">Belongs to the heme-copper respiratory oxidase family.</text>
</comment>
<accession>P50656</accession>
<proteinExistence type="inferred from homology"/>
<keyword id="KW-0106">Calcium</keyword>
<keyword id="KW-0186">Copper</keyword>
<keyword id="KW-0249">Electron transport</keyword>
<keyword id="KW-0349">Heme</keyword>
<keyword id="KW-0408">Iron</keyword>
<keyword id="KW-0472">Membrane</keyword>
<keyword id="KW-0479">Metal-binding</keyword>
<keyword id="KW-0496">Mitochondrion</keyword>
<keyword id="KW-0999">Mitochondrion inner membrane</keyword>
<keyword id="KW-0679">Respiratory chain</keyword>
<keyword id="KW-0915">Sodium</keyword>
<keyword id="KW-1278">Translocase</keyword>
<keyword id="KW-0812">Transmembrane</keyword>
<keyword id="KW-1133">Transmembrane helix</keyword>
<keyword id="KW-0813">Transport</keyword>
<gene>
    <name type="primary">MT-CO1</name>
    <name type="synonym">COI</name>
    <name type="synonym">COXI</name>
    <name type="synonym">MTCO1</name>
</gene>
<reference key="1">
    <citation type="journal article" date="1993" name="J. Mol. Evol.">
        <title>Molecular characterization and evolution of a duck mitochondrial genome.</title>
        <authorList>
            <person name="Ramirez V."/>
            <person name="Savoie P."/>
            <person name="Morais R."/>
        </authorList>
    </citation>
    <scope>NUCLEOTIDE SEQUENCE</scope>
    <source>
        <strain>Pekin breed</strain>
        <tissue>Liver</tissue>
    </source>
</reference>
<reference key="2">
    <citation type="journal article" date="1990" name="Curr. Genet.">
        <title>Gene organization of the Peking duck mitochondrial genome.</title>
        <authorList>
            <person name="Desjardins P."/>
            <person name="Ramirez V."/>
            <person name="Morais R."/>
        </authorList>
    </citation>
    <scope>NUCLEOTIDE SEQUENCE [GENOMIC DNA] OF 27-59</scope>
    <source>
        <strain>Pekin breed</strain>
        <tissue>Liver</tissue>
    </source>
</reference>
<dbReference type="EC" id="7.1.1.9"/>
<dbReference type="EMBL" id="L22480">
    <property type="protein sequence ID" value="AAA16541.1"/>
    <property type="molecule type" value="Unassigned_DNA"/>
</dbReference>
<dbReference type="EMBL" id="X55529">
    <property type="protein sequence ID" value="CAA39146.1"/>
    <property type="molecule type" value="Genomic_DNA"/>
</dbReference>
<dbReference type="SMR" id="P50656"/>
<dbReference type="UniPathway" id="UPA00705"/>
<dbReference type="Proteomes" id="UP000694400">
    <property type="component" value="Unplaced"/>
</dbReference>
<dbReference type="GO" id="GO:0005743">
    <property type="term" value="C:mitochondrial inner membrane"/>
    <property type="evidence" value="ECO:0007669"/>
    <property type="project" value="UniProtKB-SubCell"/>
</dbReference>
<dbReference type="GO" id="GO:0045277">
    <property type="term" value="C:respiratory chain complex IV"/>
    <property type="evidence" value="ECO:0000250"/>
    <property type="project" value="UniProtKB"/>
</dbReference>
<dbReference type="GO" id="GO:0004129">
    <property type="term" value="F:cytochrome-c oxidase activity"/>
    <property type="evidence" value="ECO:0007669"/>
    <property type="project" value="UniProtKB-EC"/>
</dbReference>
<dbReference type="GO" id="GO:0020037">
    <property type="term" value="F:heme binding"/>
    <property type="evidence" value="ECO:0007669"/>
    <property type="project" value="InterPro"/>
</dbReference>
<dbReference type="GO" id="GO:0046872">
    <property type="term" value="F:metal ion binding"/>
    <property type="evidence" value="ECO:0007669"/>
    <property type="project" value="UniProtKB-KW"/>
</dbReference>
<dbReference type="GO" id="GO:0015990">
    <property type="term" value="P:electron transport coupled proton transport"/>
    <property type="evidence" value="ECO:0007669"/>
    <property type="project" value="TreeGrafter"/>
</dbReference>
<dbReference type="GO" id="GO:0006123">
    <property type="term" value="P:mitochondrial electron transport, cytochrome c to oxygen"/>
    <property type="evidence" value="ECO:0007669"/>
    <property type="project" value="TreeGrafter"/>
</dbReference>
<dbReference type="Gene3D" id="1.20.210.10">
    <property type="entry name" value="Cytochrome c oxidase-like, subunit I domain"/>
    <property type="match status" value="1"/>
</dbReference>
<dbReference type="InterPro" id="IPR023616">
    <property type="entry name" value="Cyt_c_oxase-like_su1_dom"/>
</dbReference>
<dbReference type="InterPro" id="IPR036927">
    <property type="entry name" value="Cyt_c_oxase-like_su1_sf"/>
</dbReference>
<dbReference type="InterPro" id="IPR000883">
    <property type="entry name" value="Cyt_C_Oxase_1"/>
</dbReference>
<dbReference type="PANTHER" id="PTHR10422">
    <property type="entry name" value="CYTOCHROME C OXIDASE SUBUNIT 1"/>
    <property type="match status" value="1"/>
</dbReference>
<dbReference type="PANTHER" id="PTHR10422:SF18">
    <property type="entry name" value="CYTOCHROME C OXIDASE SUBUNIT 1"/>
    <property type="match status" value="1"/>
</dbReference>
<dbReference type="Pfam" id="PF00115">
    <property type="entry name" value="COX1"/>
    <property type="match status" value="1"/>
</dbReference>
<dbReference type="PRINTS" id="PR01165">
    <property type="entry name" value="CYCOXIDASEI"/>
</dbReference>
<dbReference type="SUPFAM" id="SSF81442">
    <property type="entry name" value="Cytochrome c oxidase subunit I-like"/>
    <property type="match status" value="1"/>
</dbReference>
<dbReference type="PROSITE" id="PS50855">
    <property type="entry name" value="COX1"/>
    <property type="match status" value="1"/>
</dbReference>